<feature type="chain" id="PRO_1000071439" description="N-(5'-phosphoribosyl)anthranilate isomerase">
    <location>
        <begin position="1"/>
        <end position="202"/>
    </location>
</feature>
<proteinExistence type="inferred from homology"/>
<organism>
    <name type="scientific">Geobacter metallireducens (strain ATCC 53774 / DSM 7210 / GS-15)</name>
    <dbReference type="NCBI Taxonomy" id="269799"/>
    <lineage>
        <taxon>Bacteria</taxon>
        <taxon>Pseudomonadati</taxon>
        <taxon>Thermodesulfobacteriota</taxon>
        <taxon>Desulfuromonadia</taxon>
        <taxon>Geobacterales</taxon>
        <taxon>Geobacteraceae</taxon>
        <taxon>Geobacter</taxon>
    </lineage>
</organism>
<accession>Q39SQ9</accession>
<keyword id="KW-0028">Amino-acid biosynthesis</keyword>
<keyword id="KW-0057">Aromatic amino acid biosynthesis</keyword>
<keyword id="KW-0413">Isomerase</keyword>
<keyword id="KW-1185">Reference proteome</keyword>
<keyword id="KW-0822">Tryptophan biosynthesis</keyword>
<name>TRPF_GEOMG</name>
<reference key="1">
    <citation type="journal article" date="2009" name="BMC Microbiol.">
        <title>The genome sequence of Geobacter metallireducens: features of metabolism, physiology and regulation common and dissimilar to Geobacter sulfurreducens.</title>
        <authorList>
            <person name="Aklujkar M."/>
            <person name="Krushkal J."/>
            <person name="DiBartolo G."/>
            <person name="Lapidus A."/>
            <person name="Land M.L."/>
            <person name="Lovley D.R."/>
        </authorList>
    </citation>
    <scope>NUCLEOTIDE SEQUENCE [LARGE SCALE GENOMIC DNA]</scope>
    <source>
        <strain>ATCC 53774 / DSM 7210 / GS-15</strain>
    </source>
</reference>
<comment type="catalytic activity">
    <reaction evidence="1">
        <text>N-(5-phospho-beta-D-ribosyl)anthranilate = 1-(2-carboxyphenylamino)-1-deoxy-D-ribulose 5-phosphate</text>
        <dbReference type="Rhea" id="RHEA:21540"/>
        <dbReference type="ChEBI" id="CHEBI:18277"/>
        <dbReference type="ChEBI" id="CHEBI:58613"/>
        <dbReference type="EC" id="5.3.1.24"/>
    </reaction>
</comment>
<comment type="pathway">
    <text evidence="1">Amino-acid biosynthesis; L-tryptophan biosynthesis; L-tryptophan from chorismate: step 3/5.</text>
</comment>
<comment type="similarity">
    <text evidence="1">Belongs to the TrpF family.</text>
</comment>
<dbReference type="EC" id="5.3.1.24" evidence="1"/>
<dbReference type="EMBL" id="CP000148">
    <property type="protein sequence ID" value="ABB32715.1"/>
    <property type="molecule type" value="Genomic_DNA"/>
</dbReference>
<dbReference type="RefSeq" id="WP_004514654.1">
    <property type="nucleotide sequence ID" value="NC_007517.1"/>
</dbReference>
<dbReference type="SMR" id="Q39SQ9"/>
<dbReference type="STRING" id="269799.Gmet_2492"/>
<dbReference type="KEGG" id="gme:Gmet_2492"/>
<dbReference type="eggNOG" id="COG0135">
    <property type="taxonomic scope" value="Bacteria"/>
</dbReference>
<dbReference type="HOGENOM" id="CLU_076364_2_0_7"/>
<dbReference type="UniPathway" id="UPA00035">
    <property type="reaction ID" value="UER00042"/>
</dbReference>
<dbReference type="Proteomes" id="UP000007073">
    <property type="component" value="Chromosome"/>
</dbReference>
<dbReference type="GO" id="GO:0004640">
    <property type="term" value="F:phosphoribosylanthranilate isomerase activity"/>
    <property type="evidence" value="ECO:0007669"/>
    <property type="project" value="UniProtKB-UniRule"/>
</dbReference>
<dbReference type="GO" id="GO:0000162">
    <property type="term" value="P:L-tryptophan biosynthetic process"/>
    <property type="evidence" value="ECO:0007669"/>
    <property type="project" value="UniProtKB-UniRule"/>
</dbReference>
<dbReference type="CDD" id="cd00405">
    <property type="entry name" value="PRAI"/>
    <property type="match status" value="1"/>
</dbReference>
<dbReference type="FunFam" id="3.20.20.70:FF:000075">
    <property type="entry name" value="Tryptophan biosynthesis protein TRP1"/>
    <property type="match status" value="1"/>
</dbReference>
<dbReference type="Gene3D" id="3.20.20.70">
    <property type="entry name" value="Aldolase class I"/>
    <property type="match status" value="1"/>
</dbReference>
<dbReference type="HAMAP" id="MF_00135">
    <property type="entry name" value="PRAI"/>
    <property type="match status" value="1"/>
</dbReference>
<dbReference type="InterPro" id="IPR013785">
    <property type="entry name" value="Aldolase_TIM"/>
</dbReference>
<dbReference type="InterPro" id="IPR001240">
    <property type="entry name" value="PRAI_dom"/>
</dbReference>
<dbReference type="InterPro" id="IPR011060">
    <property type="entry name" value="RibuloseP-bd_barrel"/>
</dbReference>
<dbReference type="InterPro" id="IPR044643">
    <property type="entry name" value="TrpF_fam"/>
</dbReference>
<dbReference type="NCBIfam" id="NF002298">
    <property type="entry name" value="PRK01222.1-4"/>
    <property type="match status" value="1"/>
</dbReference>
<dbReference type="PANTHER" id="PTHR42894">
    <property type="entry name" value="N-(5'-PHOSPHORIBOSYL)ANTHRANILATE ISOMERASE"/>
    <property type="match status" value="1"/>
</dbReference>
<dbReference type="PANTHER" id="PTHR42894:SF1">
    <property type="entry name" value="N-(5'-PHOSPHORIBOSYL)ANTHRANILATE ISOMERASE"/>
    <property type="match status" value="1"/>
</dbReference>
<dbReference type="Pfam" id="PF00697">
    <property type="entry name" value="PRAI"/>
    <property type="match status" value="1"/>
</dbReference>
<dbReference type="SUPFAM" id="SSF51366">
    <property type="entry name" value="Ribulose-phoshate binding barrel"/>
    <property type="match status" value="1"/>
</dbReference>
<evidence type="ECO:0000255" key="1">
    <source>
        <dbReference type="HAMAP-Rule" id="MF_00135"/>
    </source>
</evidence>
<gene>
    <name evidence="1" type="primary">trpF</name>
    <name type="ordered locus">Gmet_2492</name>
</gene>
<protein>
    <recommendedName>
        <fullName evidence="1">N-(5'-phosphoribosyl)anthranilate isomerase</fullName>
        <shortName evidence="1">PRAI</shortName>
        <ecNumber evidence="1">5.3.1.24</ecNumber>
    </recommendedName>
</protein>
<sequence length="202" mass="21717">MVRVKICGITSLEDALMAVEAGADALGFVFHEDSPRHVPPEQATGIIAGLPPFVQTVGLFVNRPIAYVNETAARCRIDLVQLHGDEPPEFCAAVERRVIKAFRVQDITSLDPIKHYRVAAHLLDAYSPKAYGGTGLTFNWDIAAAAKEFGPVILAGGLTPDNIREAVEAVNPYAVDVSGGVESAPGRKDAAKVREFIRRAKA</sequence>